<gene>
    <name evidence="1" type="primary">dapB</name>
    <name type="ordered locus">LL1561</name>
    <name type="ORF">L0094</name>
</gene>
<name>DAPB_LACLA</name>
<feature type="chain" id="PRO_0000141448" description="4-hydroxy-tetrahydrodipicolinate reductase">
    <location>
        <begin position="1"/>
        <end position="260"/>
    </location>
</feature>
<feature type="active site" description="Proton donor/acceptor" evidence="1">
    <location>
        <position position="148"/>
    </location>
</feature>
<feature type="active site" description="Proton donor" evidence="1">
    <location>
        <position position="152"/>
    </location>
</feature>
<feature type="binding site" evidence="1">
    <location>
        <begin position="12"/>
        <end position="17"/>
    </location>
    <ligand>
        <name>NAD(+)</name>
        <dbReference type="ChEBI" id="CHEBI:57540"/>
    </ligand>
</feature>
<feature type="binding site" evidence="1">
    <location>
        <position position="40"/>
    </location>
    <ligand>
        <name>NADP(+)</name>
        <dbReference type="ChEBI" id="CHEBI:58349"/>
    </ligand>
</feature>
<feature type="binding site" evidence="1">
    <location>
        <begin position="92"/>
        <end position="94"/>
    </location>
    <ligand>
        <name>NAD(+)</name>
        <dbReference type="ChEBI" id="CHEBI:57540"/>
    </ligand>
</feature>
<feature type="binding site" evidence="1">
    <location>
        <begin position="118"/>
        <end position="121"/>
    </location>
    <ligand>
        <name>NAD(+)</name>
        <dbReference type="ChEBI" id="CHEBI:57540"/>
    </ligand>
</feature>
<feature type="binding site" evidence="1">
    <location>
        <position position="149"/>
    </location>
    <ligand>
        <name>(S)-2,3,4,5-tetrahydrodipicolinate</name>
        <dbReference type="ChEBI" id="CHEBI:16845"/>
    </ligand>
</feature>
<feature type="binding site" evidence="1">
    <location>
        <begin position="158"/>
        <end position="159"/>
    </location>
    <ligand>
        <name>(S)-2,3,4,5-tetrahydrodipicolinate</name>
        <dbReference type="ChEBI" id="CHEBI:16845"/>
    </ligand>
</feature>
<comment type="function">
    <text evidence="1">Catalyzes the conversion of 4-hydroxy-tetrahydrodipicolinate (HTPA) to tetrahydrodipicolinate.</text>
</comment>
<comment type="catalytic activity">
    <reaction evidence="1">
        <text>(S)-2,3,4,5-tetrahydrodipicolinate + NAD(+) + H2O = (2S,4S)-4-hydroxy-2,3,4,5-tetrahydrodipicolinate + NADH + H(+)</text>
        <dbReference type="Rhea" id="RHEA:35323"/>
        <dbReference type="ChEBI" id="CHEBI:15377"/>
        <dbReference type="ChEBI" id="CHEBI:15378"/>
        <dbReference type="ChEBI" id="CHEBI:16845"/>
        <dbReference type="ChEBI" id="CHEBI:57540"/>
        <dbReference type="ChEBI" id="CHEBI:57945"/>
        <dbReference type="ChEBI" id="CHEBI:67139"/>
        <dbReference type="EC" id="1.17.1.8"/>
    </reaction>
</comment>
<comment type="catalytic activity">
    <reaction evidence="1">
        <text>(S)-2,3,4,5-tetrahydrodipicolinate + NADP(+) + H2O = (2S,4S)-4-hydroxy-2,3,4,5-tetrahydrodipicolinate + NADPH + H(+)</text>
        <dbReference type="Rhea" id="RHEA:35331"/>
        <dbReference type="ChEBI" id="CHEBI:15377"/>
        <dbReference type="ChEBI" id="CHEBI:15378"/>
        <dbReference type="ChEBI" id="CHEBI:16845"/>
        <dbReference type="ChEBI" id="CHEBI:57783"/>
        <dbReference type="ChEBI" id="CHEBI:58349"/>
        <dbReference type="ChEBI" id="CHEBI:67139"/>
        <dbReference type="EC" id="1.17.1.8"/>
    </reaction>
</comment>
<comment type="pathway">
    <text evidence="1">Amino-acid biosynthesis; L-lysine biosynthesis via DAP pathway; (S)-tetrahydrodipicolinate from L-aspartate: step 4/4.</text>
</comment>
<comment type="subcellular location">
    <subcellularLocation>
        <location evidence="1">Cytoplasm</location>
    </subcellularLocation>
</comment>
<comment type="similarity">
    <text evidence="1">Belongs to the DapB family.</text>
</comment>
<comment type="caution">
    <text evidence="2">Was originally thought to be a dihydrodipicolinate reductase (DHDPR), catalyzing the conversion of dihydrodipicolinate to tetrahydrodipicolinate. However, it was shown in E.coli that the substrate of the enzymatic reaction is not dihydrodipicolinate (DHDP) but in fact (2S,4S)-4-hydroxy-2,3,4,5-tetrahydrodipicolinic acid (HTPA), the product released by the DapA-catalyzed reaction.</text>
</comment>
<proteinExistence type="inferred from homology"/>
<reference key="1">
    <citation type="journal article" date="2001" name="Genome Res.">
        <title>The complete genome sequence of the lactic acid bacterium Lactococcus lactis ssp. lactis IL1403.</title>
        <authorList>
            <person name="Bolotin A."/>
            <person name="Wincker P."/>
            <person name="Mauger S."/>
            <person name="Jaillon O."/>
            <person name="Malarme K."/>
            <person name="Weissenbach J."/>
            <person name="Ehrlich S.D."/>
            <person name="Sorokin A."/>
        </authorList>
    </citation>
    <scope>NUCLEOTIDE SEQUENCE [LARGE SCALE GENOMIC DNA]</scope>
    <source>
        <strain>IL1403</strain>
    </source>
</reference>
<organism>
    <name type="scientific">Lactococcus lactis subsp. lactis (strain IL1403)</name>
    <name type="common">Streptococcus lactis</name>
    <dbReference type="NCBI Taxonomy" id="272623"/>
    <lineage>
        <taxon>Bacteria</taxon>
        <taxon>Bacillati</taxon>
        <taxon>Bacillota</taxon>
        <taxon>Bacilli</taxon>
        <taxon>Lactobacillales</taxon>
        <taxon>Streptococcaceae</taxon>
        <taxon>Lactococcus</taxon>
    </lineage>
</organism>
<keyword id="KW-0028">Amino-acid biosynthesis</keyword>
<keyword id="KW-0963">Cytoplasm</keyword>
<keyword id="KW-0220">Diaminopimelate biosynthesis</keyword>
<keyword id="KW-0457">Lysine biosynthesis</keyword>
<keyword id="KW-0520">NAD</keyword>
<keyword id="KW-0521">NADP</keyword>
<keyword id="KW-0560">Oxidoreductase</keyword>
<keyword id="KW-1185">Reference proteome</keyword>
<evidence type="ECO:0000255" key="1">
    <source>
        <dbReference type="HAMAP-Rule" id="MF_00102"/>
    </source>
</evidence>
<evidence type="ECO:0000305" key="2"/>
<dbReference type="EC" id="1.17.1.8" evidence="1"/>
<dbReference type="EMBL" id="AE005176">
    <property type="protein sequence ID" value="AAK05659.1"/>
    <property type="molecule type" value="Genomic_DNA"/>
</dbReference>
<dbReference type="PIR" id="A86820">
    <property type="entry name" value="A86820"/>
</dbReference>
<dbReference type="RefSeq" id="NP_267717.1">
    <property type="nucleotide sequence ID" value="NC_002662.1"/>
</dbReference>
<dbReference type="RefSeq" id="WP_010906032.1">
    <property type="nucleotide sequence ID" value="NC_002662.1"/>
</dbReference>
<dbReference type="SMR" id="Q9CFC0"/>
<dbReference type="PaxDb" id="272623-L0094"/>
<dbReference type="EnsemblBacteria" id="AAK05659">
    <property type="protein sequence ID" value="AAK05659"/>
    <property type="gene ID" value="L0094"/>
</dbReference>
<dbReference type="KEGG" id="lla:L0094"/>
<dbReference type="PATRIC" id="fig|272623.7.peg.1679"/>
<dbReference type="eggNOG" id="COG0289">
    <property type="taxonomic scope" value="Bacteria"/>
</dbReference>
<dbReference type="HOGENOM" id="CLU_047479_0_1_9"/>
<dbReference type="OrthoDB" id="9790352at2"/>
<dbReference type="UniPathway" id="UPA00034">
    <property type="reaction ID" value="UER00018"/>
</dbReference>
<dbReference type="Proteomes" id="UP000002196">
    <property type="component" value="Chromosome"/>
</dbReference>
<dbReference type="GO" id="GO:0005829">
    <property type="term" value="C:cytosol"/>
    <property type="evidence" value="ECO:0007669"/>
    <property type="project" value="TreeGrafter"/>
</dbReference>
<dbReference type="GO" id="GO:0008839">
    <property type="term" value="F:4-hydroxy-tetrahydrodipicolinate reductase"/>
    <property type="evidence" value="ECO:0007669"/>
    <property type="project" value="UniProtKB-EC"/>
</dbReference>
<dbReference type="GO" id="GO:0051287">
    <property type="term" value="F:NAD binding"/>
    <property type="evidence" value="ECO:0007669"/>
    <property type="project" value="UniProtKB-UniRule"/>
</dbReference>
<dbReference type="GO" id="GO:0050661">
    <property type="term" value="F:NADP binding"/>
    <property type="evidence" value="ECO:0007669"/>
    <property type="project" value="UniProtKB-UniRule"/>
</dbReference>
<dbReference type="GO" id="GO:0016726">
    <property type="term" value="F:oxidoreductase activity, acting on CH or CH2 groups, NAD or NADP as acceptor"/>
    <property type="evidence" value="ECO:0007669"/>
    <property type="project" value="UniProtKB-UniRule"/>
</dbReference>
<dbReference type="GO" id="GO:0019877">
    <property type="term" value="P:diaminopimelate biosynthetic process"/>
    <property type="evidence" value="ECO:0007669"/>
    <property type="project" value="UniProtKB-UniRule"/>
</dbReference>
<dbReference type="GO" id="GO:0009089">
    <property type="term" value="P:lysine biosynthetic process via diaminopimelate"/>
    <property type="evidence" value="ECO:0007669"/>
    <property type="project" value="UniProtKB-UniRule"/>
</dbReference>
<dbReference type="CDD" id="cd02274">
    <property type="entry name" value="DHDPR_N"/>
    <property type="match status" value="1"/>
</dbReference>
<dbReference type="FunFam" id="3.30.360.10:FF:000009">
    <property type="entry name" value="4-hydroxy-tetrahydrodipicolinate reductase"/>
    <property type="match status" value="1"/>
</dbReference>
<dbReference type="Gene3D" id="3.30.360.10">
    <property type="entry name" value="Dihydrodipicolinate Reductase, domain 2"/>
    <property type="match status" value="1"/>
</dbReference>
<dbReference type="Gene3D" id="3.40.50.720">
    <property type="entry name" value="NAD(P)-binding Rossmann-like Domain"/>
    <property type="match status" value="1"/>
</dbReference>
<dbReference type="HAMAP" id="MF_00102">
    <property type="entry name" value="DapB"/>
    <property type="match status" value="1"/>
</dbReference>
<dbReference type="InterPro" id="IPR022663">
    <property type="entry name" value="DapB_C"/>
</dbReference>
<dbReference type="InterPro" id="IPR000846">
    <property type="entry name" value="DapB_N"/>
</dbReference>
<dbReference type="InterPro" id="IPR022664">
    <property type="entry name" value="DapB_N_CS"/>
</dbReference>
<dbReference type="InterPro" id="IPR023940">
    <property type="entry name" value="DHDPR_bac"/>
</dbReference>
<dbReference type="InterPro" id="IPR036291">
    <property type="entry name" value="NAD(P)-bd_dom_sf"/>
</dbReference>
<dbReference type="NCBIfam" id="TIGR00036">
    <property type="entry name" value="dapB"/>
    <property type="match status" value="1"/>
</dbReference>
<dbReference type="PANTHER" id="PTHR20836:SF0">
    <property type="entry name" value="4-HYDROXY-TETRAHYDRODIPICOLINATE REDUCTASE 1, CHLOROPLASTIC-RELATED"/>
    <property type="match status" value="1"/>
</dbReference>
<dbReference type="PANTHER" id="PTHR20836">
    <property type="entry name" value="DIHYDRODIPICOLINATE REDUCTASE"/>
    <property type="match status" value="1"/>
</dbReference>
<dbReference type="Pfam" id="PF05173">
    <property type="entry name" value="DapB_C"/>
    <property type="match status" value="1"/>
</dbReference>
<dbReference type="Pfam" id="PF01113">
    <property type="entry name" value="DapB_N"/>
    <property type="match status" value="1"/>
</dbReference>
<dbReference type="PIRSF" id="PIRSF000161">
    <property type="entry name" value="DHPR"/>
    <property type="match status" value="1"/>
</dbReference>
<dbReference type="SUPFAM" id="SSF55347">
    <property type="entry name" value="Glyceraldehyde-3-phosphate dehydrogenase-like, C-terminal domain"/>
    <property type="match status" value="1"/>
</dbReference>
<dbReference type="SUPFAM" id="SSF51735">
    <property type="entry name" value="NAD(P)-binding Rossmann-fold domains"/>
    <property type="match status" value="1"/>
</dbReference>
<dbReference type="PROSITE" id="PS01298">
    <property type="entry name" value="DAPB"/>
    <property type="match status" value="1"/>
</dbReference>
<sequence length="260" mass="28491">MKLNKIKVIVAGFRGKMGATAVQMILNAQNFELMALLGKKEEVSEAFGVPVFSRKEDLIGFDADIWLDLTAPEAAYKNTRFALENGFRPVVGTTGFTDDEVADLIKFSREKELGGLIAPNFALGAVLLMQFSKQAVKYFPDVEIIELHHDGKKDAPSGTAVKTAELMSEERLAHHQGAVDEKEALAGARGADLEGMRIHSVRLPGLVAHQEVIFGSKGEGLTLRHDSYDRSSFMTGIALGIRKVMTVSELKYGLEHFLDL</sequence>
<protein>
    <recommendedName>
        <fullName evidence="1">4-hydroxy-tetrahydrodipicolinate reductase</fullName>
        <shortName evidence="1">HTPA reductase</shortName>
        <ecNumber evidence="1">1.17.1.8</ecNumber>
    </recommendedName>
</protein>
<accession>Q9CFC0</accession>